<name>CTRC_RAT</name>
<sequence>MLGITVLAAILACASCCGNPAFPPNLSTRVVGGEDAVPNSWPWQVSLQYLKDDTWRHTCGGSLITTSHVLTAAHCINKDFTYRVGLGKYNLTVEDEEGSVYAEVDTIYVHEKWNRLFLWNDIAIIKLAEPVELSNTIQVACIPEEGSLLPQDYPCYVTGWGRLWTNGPIAEVLQQGLQPIVSHATCSRLDWWFIKVRKTMVCAGGDGVISACNGDSGGPLNCQAEDGSWQVHGIVSFGSSSGCNVHKKPVVFTRVSAYNDWINEKIQL</sequence>
<comment type="function">
    <text evidence="2 3">Regulates activation and degradation of trypsinogens and procarboxypeptidases by targeting specific cleavage sites within their zymogen precursors (By similarity). Has chymotrypsin-type protease activity and hypocalcemic activity (By similarity). Cleaves TRY4 and TRY5 and thereby inhibits their autoactivation (By similarity).</text>
</comment>
<comment type="catalytic activity">
    <reaction>
        <text>Preferential cleavage: Leu-|-Xaa, Tyr-|-Xaa, Phe-|-Xaa, Met-|-Xaa, Trp-|-Xaa, Gln-|-Xaa, Asn-|-Xaa.</text>
        <dbReference type="EC" id="3.4.21.2"/>
    </reaction>
</comment>
<comment type="tissue specificity">
    <text>Pancreas.</text>
</comment>
<comment type="similarity">
    <text evidence="5">Belongs to the peptidase S1 family. Elastase subfamily.</text>
</comment>
<comment type="caution">
    <text evidence="7">Was originally thought to be elastase IV.</text>
</comment>
<accession>P55091</accession>
<accession>Q63188</accession>
<gene>
    <name type="primary">Ctrc</name>
</gene>
<reference key="1">
    <citation type="journal article" date="1995" name="J. Biol. Chem.">
        <title>Molecular cloning and expression of serum calcium-decreasing factor (caldecrin).</title>
        <authorList>
            <person name="Tomomura A."/>
            <person name="Tomomura M."/>
            <person name="Fukushige T."/>
            <person name="Akiyama M."/>
            <person name="Kubota N."/>
            <person name="Kumaki K."/>
            <person name="Nishii Y."/>
            <person name="Noikura T."/>
            <person name="Saheki T."/>
        </authorList>
    </citation>
    <scope>NUCLEOTIDE SEQUENCE [MRNA]</scope>
    <scope>PARTIAL PROTEIN SEQUENCE</scope>
    <source>
        <tissue>Pancreas</tissue>
    </source>
</reference>
<reference key="2">
    <citation type="journal article" date="1992" name="Gene">
        <title>Identification of cDNAs encoding two novel rat pancreatic serine proteases.</title>
        <authorList>
            <person name="Kang J."/>
            <person name="Wiegand U."/>
            <person name="Mueller-Hill B."/>
        </authorList>
    </citation>
    <scope>NUCLEOTIDE SEQUENCE [MRNA]</scope>
    <source>
        <tissue>Pancreas</tissue>
    </source>
</reference>
<reference key="3">
    <citation type="journal article" date="1998" name="J. Biochem.">
        <title>Caldecrin is a novel-type serine protease expressed in pancreas, but its homologue, elastase IV, is an artifact during cloning derived from caldecrin gene.</title>
        <authorList>
            <person name="Yoshino-Yasuda I."/>
            <person name="Kobayashi K."/>
            <person name="Akiyama M."/>
            <person name="Itoh H."/>
            <person name="Tomomura A."/>
            <person name="Saheki T."/>
        </authorList>
    </citation>
    <scope>CHARACTERIZATION</scope>
</reference>
<evidence type="ECO:0000250" key="1"/>
<evidence type="ECO:0000250" key="2">
    <source>
        <dbReference type="UniProtKB" id="Q3SYP2"/>
    </source>
</evidence>
<evidence type="ECO:0000250" key="3">
    <source>
        <dbReference type="UniProtKB" id="Q99895"/>
    </source>
</evidence>
<evidence type="ECO:0000255" key="4"/>
<evidence type="ECO:0000255" key="5">
    <source>
        <dbReference type="PROSITE-ProRule" id="PRU00274"/>
    </source>
</evidence>
<evidence type="ECO:0000305" key="6"/>
<evidence type="ECO:0000305" key="7">
    <source>
    </source>
</evidence>
<protein>
    <recommendedName>
        <fullName>Chymotrypsin-C</fullName>
        <ecNumber>3.4.21.2</ecNumber>
    </recommendedName>
    <alternativeName>
        <fullName>Caldecrin</fullName>
    </alternativeName>
    <alternativeName>
        <fullName>Serum calcium-decreasing factor</fullName>
    </alternativeName>
</protein>
<dbReference type="EC" id="3.4.21.2"/>
<dbReference type="EMBL" id="S80379">
    <property type="protein sequence ID" value="AAB35830.1"/>
    <property type="molecule type" value="mRNA"/>
</dbReference>
<dbReference type="EMBL" id="X59014">
    <property type="protein sequence ID" value="CAA41753.1"/>
    <property type="molecule type" value="mRNA"/>
</dbReference>
<dbReference type="PIR" id="JQ1473">
    <property type="entry name" value="JQ1473"/>
</dbReference>
<dbReference type="RefSeq" id="NP_001071117.1">
    <property type="nucleotide sequence ID" value="NM_001077649.2"/>
</dbReference>
<dbReference type="SMR" id="P55091"/>
<dbReference type="FunCoup" id="P55091">
    <property type="interactions" value="41"/>
</dbReference>
<dbReference type="STRING" id="10116.ENSRNOP00000018393"/>
<dbReference type="MEROPS" id="S01.157"/>
<dbReference type="GlyCosmos" id="P55091">
    <property type="glycosylation" value="2 sites, No reported glycans"/>
</dbReference>
<dbReference type="GlyGen" id="P55091">
    <property type="glycosylation" value="2 sites"/>
</dbReference>
<dbReference type="PaxDb" id="10116-ENSRNOP00000018393"/>
<dbReference type="GeneID" id="362653"/>
<dbReference type="KEGG" id="rno:362653"/>
<dbReference type="UCSC" id="RGD:1308379">
    <property type="organism name" value="rat"/>
</dbReference>
<dbReference type="AGR" id="RGD:1308379"/>
<dbReference type="CTD" id="11330"/>
<dbReference type="RGD" id="1308379">
    <property type="gene designation" value="Ctrc"/>
</dbReference>
<dbReference type="VEuPathDB" id="HostDB:ENSRNOG00000013745"/>
<dbReference type="eggNOG" id="KOG3627">
    <property type="taxonomic scope" value="Eukaryota"/>
</dbReference>
<dbReference type="HOGENOM" id="CLU_006842_0_4_1"/>
<dbReference type="InParanoid" id="P55091"/>
<dbReference type="OrthoDB" id="10061449at2759"/>
<dbReference type="PhylomeDB" id="P55091"/>
<dbReference type="TreeFam" id="TF330455"/>
<dbReference type="PRO" id="PR:P55091"/>
<dbReference type="Proteomes" id="UP000002494">
    <property type="component" value="Chromosome 5"/>
</dbReference>
<dbReference type="Bgee" id="ENSRNOG00000013745">
    <property type="expression patterns" value="Expressed in pancreas and 19 other cell types or tissues"/>
</dbReference>
<dbReference type="ExpressionAtlas" id="P55091">
    <property type="expression patterns" value="baseline and differential"/>
</dbReference>
<dbReference type="GO" id="GO:0008233">
    <property type="term" value="F:peptidase activity"/>
    <property type="evidence" value="ECO:0000266"/>
    <property type="project" value="RGD"/>
</dbReference>
<dbReference type="GO" id="GO:0004252">
    <property type="term" value="F:serine-type endopeptidase activity"/>
    <property type="evidence" value="ECO:0000266"/>
    <property type="project" value="RGD"/>
</dbReference>
<dbReference type="GO" id="GO:0006874">
    <property type="term" value="P:intracellular calcium ion homeostasis"/>
    <property type="evidence" value="ECO:0000266"/>
    <property type="project" value="RGD"/>
</dbReference>
<dbReference type="GO" id="GO:0006508">
    <property type="term" value="P:proteolysis"/>
    <property type="evidence" value="ECO:0000266"/>
    <property type="project" value="RGD"/>
</dbReference>
<dbReference type="CDD" id="cd00190">
    <property type="entry name" value="Tryp_SPc"/>
    <property type="match status" value="1"/>
</dbReference>
<dbReference type="FunFam" id="2.40.10.10:FF:000280">
    <property type="match status" value="1"/>
</dbReference>
<dbReference type="FunFam" id="2.40.10.10:FF:000004">
    <property type="entry name" value="Tryptase gamma 1"/>
    <property type="match status" value="1"/>
</dbReference>
<dbReference type="Gene3D" id="2.40.10.10">
    <property type="entry name" value="Trypsin-like serine proteases"/>
    <property type="match status" value="2"/>
</dbReference>
<dbReference type="InterPro" id="IPR050850">
    <property type="entry name" value="Peptidase_S1_Elastase_sf"/>
</dbReference>
<dbReference type="InterPro" id="IPR009003">
    <property type="entry name" value="Peptidase_S1_PA"/>
</dbReference>
<dbReference type="InterPro" id="IPR043504">
    <property type="entry name" value="Peptidase_S1_PA_chymotrypsin"/>
</dbReference>
<dbReference type="InterPro" id="IPR001314">
    <property type="entry name" value="Peptidase_S1A"/>
</dbReference>
<dbReference type="InterPro" id="IPR001254">
    <property type="entry name" value="Trypsin_dom"/>
</dbReference>
<dbReference type="InterPro" id="IPR018114">
    <property type="entry name" value="TRYPSIN_HIS"/>
</dbReference>
<dbReference type="InterPro" id="IPR033116">
    <property type="entry name" value="TRYPSIN_SER"/>
</dbReference>
<dbReference type="PANTHER" id="PTHR24257">
    <property type="entry name" value="CHYMOTRYPSIN-LIKE ELASTASE FAMILY MEMBER"/>
    <property type="match status" value="1"/>
</dbReference>
<dbReference type="PANTHER" id="PTHR24257:SF31">
    <property type="entry name" value="ELASTASE 3 LIKE ISOFORM X1"/>
    <property type="match status" value="1"/>
</dbReference>
<dbReference type="Pfam" id="PF00089">
    <property type="entry name" value="Trypsin"/>
    <property type="match status" value="1"/>
</dbReference>
<dbReference type="PRINTS" id="PR00722">
    <property type="entry name" value="CHYMOTRYPSIN"/>
</dbReference>
<dbReference type="SMART" id="SM00020">
    <property type="entry name" value="Tryp_SPc"/>
    <property type="match status" value="1"/>
</dbReference>
<dbReference type="SUPFAM" id="SSF50494">
    <property type="entry name" value="Trypsin-like serine proteases"/>
    <property type="match status" value="1"/>
</dbReference>
<dbReference type="PROSITE" id="PS50240">
    <property type="entry name" value="TRYPSIN_DOM"/>
    <property type="match status" value="1"/>
</dbReference>
<dbReference type="PROSITE" id="PS00134">
    <property type="entry name" value="TRYPSIN_HIS"/>
    <property type="match status" value="1"/>
</dbReference>
<dbReference type="PROSITE" id="PS00135">
    <property type="entry name" value="TRYPSIN_SER"/>
    <property type="match status" value="1"/>
</dbReference>
<organism>
    <name type="scientific">Rattus norvegicus</name>
    <name type="common">Rat</name>
    <dbReference type="NCBI Taxonomy" id="10116"/>
    <lineage>
        <taxon>Eukaryota</taxon>
        <taxon>Metazoa</taxon>
        <taxon>Chordata</taxon>
        <taxon>Craniata</taxon>
        <taxon>Vertebrata</taxon>
        <taxon>Euteleostomi</taxon>
        <taxon>Mammalia</taxon>
        <taxon>Eutheria</taxon>
        <taxon>Euarchontoglires</taxon>
        <taxon>Glires</taxon>
        <taxon>Rodentia</taxon>
        <taxon>Myomorpha</taxon>
        <taxon>Muroidea</taxon>
        <taxon>Muridae</taxon>
        <taxon>Murinae</taxon>
        <taxon>Rattus</taxon>
    </lineage>
</organism>
<feature type="signal peptide" evidence="4">
    <location>
        <begin position="1"/>
        <end position="16"/>
    </location>
</feature>
<feature type="propeptide" id="PRO_0000027715" description="Activation peptide">
    <location>
        <begin position="17"/>
        <end position="29"/>
    </location>
</feature>
<feature type="chain" id="PRO_0000027716" description="Chymotrypsin-C">
    <location>
        <begin position="30"/>
        <end position="268"/>
    </location>
</feature>
<feature type="domain" description="Peptidase S1" evidence="5">
    <location>
        <begin position="30"/>
        <end position="267"/>
    </location>
</feature>
<feature type="active site" description="Charge relay system" evidence="1">
    <location>
        <position position="74"/>
    </location>
</feature>
<feature type="active site" description="Charge relay system" evidence="1">
    <location>
        <position position="121"/>
    </location>
</feature>
<feature type="active site" description="Charge relay system" evidence="1">
    <location>
        <position position="216"/>
    </location>
</feature>
<feature type="glycosylation site" description="N-linked (GlcNAc...) asparagine" evidence="4">
    <location>
        <position position="25"/>
    </location>
</feature>
<feature type="glycosylation site" description="N-linked (GlcNAc...) asparagine" evidence="4">
    <location>
        <position position="90"/>
    </location>
</feature>
<feature type="disulfide bond" evidence="5">
    <location>
        <begin position="17"/>
        <end position="141"/>
    </location>
</feature>
<feature type="disulfide bond" evidence="5">
    <location>
        <begin position="59"/>
        <end position="75"/>
    </location>
</feature>
<feature type="disulfide bond" evidence="5">
    <location>
        <begin position="155"/>
        <end position="222"/>
    </location>
</feature>
<feature type="disulfide bond" evidence="5">
    <location>
        <begin position="186"/>
        <end position="202"/>
    </location>
</feature>
<feature type="disulfide bond" evidence="5">
    <location>
        <begin position="212"/>
        <end position="243"/>
    </location>
</feature>
<feature type="sequence conflict" description="In Ref. 2; CAA41753." evidence="6" ref="2">
    <original>P</original>
    <variation>A</variation>
    <location>
        <position position="42"/>
    </location>
</feature>
<feature type="sequence conflict" description="In Ref. 2; CAA41753." evidence="6" ref="2">
    <original>EEGSVYAEVDTIYVHEKWNRLFLWN</original>
    <variation>AEAPCTLRWTPSTSMRSGTDSSCGT</variation>
    <location>
        <begin position="96"/>
        <end position="120"/>
    </location>
</feature>
<keyword id="KW-0903">Direct protein sequencing</keyword>
<keyword id="KW-1015">Disulfide bond</keyword>
<keyword id="KW-0325">Glycoprotein</keyword>
<keyword id="KW-0378">Hydrolase</keyword>
<keyword id="KW-0645">Protease</keyword>
<keyword id="KW-1185">Reference proteome</keyword>
<keyword id="KW-0720">Serine protease</keyword>
<keyword id="KW-0732">Signal</keyword>
<keyword id="KW-0865">Zymogen</keyword>
<proteinExistence type="evidence at protein level"/>